<sequence length="378" mass="43028">MGQSKKLNKQPSSLSPLVQLAGIRKCFDGKEVIPQLDLTINNGEFLTLLGPSGCGKTTVLRLIAGLETVDSGRIMLDNEDITHVPAENRYVNTVFQSYALFPHMTVFENVAFGLRMQKTPAAEITPRVMEALRMVQLETFAQRKPHQLSGGQQQRVAIARAVVNKPRLLLLDESLSALDYKLRKQMQNELKALQRKLGITFVFVTHDQEEALTMSDRIVVMRDGRIEQDGTPREIYEEPKNLFVAGFIGEINMFNATVIERLDEQRVRANVEGRECNIYVNFAVEPGQKLHVLLRPEDLRVEEINDDNHAEGLIGYVRERNYKGMTLESVVELENGKMVMVSEFFNEDDPDFDHSLDQKMAINWVESWEVVLADEEHK</sequence>
<accession>P69877</accession>
<accession>P23858</accession>
<keyword id="KW-0067">ATP-binding</keyword>
<keyword id="KW-0997">Cell inner membrane</keyword>
<keyword id="KW-1003">Cell membrane</keyword>
<keyword id="KW-0472">Membrane</keyword>
<keyword id="KW-0547">Nucleotide-binding</keyword>
<keyword id="KW-1185">Reference proteome</keyword>
<keyword id="KW-1278">Translocase</keyword>
<keyword id="KW-0813">Transport</keyword>
<feature type="chain" id="PRO_0000092753" description="Spermidine/putrescine import ATP-binding protein PotA">
    <location>
        <begin position="1"/>
        <end position="378"/>
    </location>
</feature>
<feature type="domain" description="ABC transporter" evidence="1">
    <location>
        <begin position="18"/>
        <end position="248"/>
    </location>
</feature>
<feature type="binding site" evidence="1">
    <location>
        <begin position="50"/>
        <end position="57"/>
    </location>
    <ligand>
        <name>ATP</name>
        <dbReference type="ChEBI" id="CHEBI:30616"/>
    </ligand>
</feature>
<organism>
    <name type="scientific">Shigella flexneri</name>
    <dbReference type="NCBI Taxonomy" id="623"/>
    <lineage>
        <taxon>Bacteria</taxon>
        <taxon>Pseudomonadati</taxon>
        <taxon>Pseudomonadota</taxon>
        <taxon>Gammaproteobacteria</taxon>
        <taxon>Enterobacterales</taxon>
        <taxon>Enterobacteriaceae</taxon>
        <taxon>Shigella</taxon>
    </lineage>
</organism>
<gene>
    <name evidence="1" type="primary">potA</name>
    <name type="ordered locus">SF1128</name>
    <name type="ordered locus">S1208</name>
</gene>
<evidence type="ECO:0000255" key="1">
    <source>
        <dbReference type="HAMAP-Rule" id="MF_01726"/>
    </source>
</evidence>
<reference key="1">
    <citation type="journal article" date="2002" name="Nucleic Acids Res.">
        <title>Genome sequence of Shigella flexneri 2a: insights into pathogenicity through comparison with genomes of Escherichia coli K12 and O157.</title>
        <authorList>
            <person name="Jin Q."/>
            <person name="Yuan Z."/>
            <person name="Xu J."/>
            <person name="Wang Y."/>
            <person name="Shen Y."/>
            <person name="Lu W."/>
            <person name="Wang J."/>
            <person name="Liu H."/>
            <person name="Yang J."/>
            <person name="Yang F."/>
            <person name="Zhang X."/>
            <person name="Zhang J."/>
            <person name="Yang G."/>
            <person name="Wu H."/>
            <person name="Qu D."/>
            <person name="Dong J."/>
            <person name="Sun L."/>
            <person name="Xue Y."/>
            <person name="Zhao A."/>
            <person name="Gao Y."/>
            <person name="Zhu J."/>
            <person name="Kan B."/>
            <person name="Ding K."/>
            <person name="Chen S."/>
            <person name="Cheng H."/>
            <person name="Yao Z."/>
            <person name="He B."/>
            <person name="Chen R."/>
            <person name="Ma D."/>
            <person name="Qiang B."/>
            <person name="Wen Y."/>
            <person name="Hou Y."/>
            <person name="Yu J."/>
        </authorList>
    </citation>
    <scope>NUCLEOTIDE SEQUENCE [LARGE SCALE GENOMIC DNA]</scope>
    <source>
        <strain>301 / Serotype 2a</strain>
    </source>
</reference>
<reference key="2">
    <citation type="journal article" date="2003" name="Infect. Immun.">
        <title>Complete genome sequence and comparative genomics of Shigella flexneri serotype 2a strain 2457T.</title>
        <authorList>
            <person name="Wei J."/>
            <person name="Goldberg M.B."/>
            <person name="Burland V."/>
            <person name="Venkatesan M.M."/>
            <person name="Deng W."/>
            <person name="Fournier G."/>
            <person name="Mayhew G.F."/>
            <person name="Plunkett G. III"/>
            <person name="Rose D.J."/>
            <person name="Darling A."/>
            <person name="Mau B."/>
            <person name="Perna N.T."/>
            <person name="Payne S.M."/>
            <person name="Runyen-Janecky L.J."/>
            <person name="Zhou S."/>
            <person name="Schwartz D.C."/>
            <person name="Blattner F.R."/>
        </authorList>
    </citation>
    <scope>NUCLEOTIDE SEQUENCE [LARGE SCALE GENOMIC DNA]</scope>
    <source>
        <strain>ATCC 700930 / 2457T / Serotype 2a</strain>
    </source>
</reference>
<comment type="function">
    <text evidence="1">Part of the ABC transporter complex PotABCD involved in spermidine/putrescine import. Responsible for energy coupling to the transport system.</text>
</comment>
<comment type="catalytic activity">
    <reaction evidence="1">
        <text>ATP + H2O + polyamine-[polyamine-binding protein]Side 1 = ADP + phosphate + polyamineSide 2 + [polyamine-binding protein]Side 1.</text>
        <dbReference type="EC" id="7.6.2.11"/>
    </reaction>
</comment>
<comment type="subunit">
    <text evidence="1">The complex is composed of two ATP-binding proteins (PotA), two transmembrane proteins (PotB and PotC) and a solute-binding protein (PotD).</text>
</comment>
<comment type="subcellular location">
    <subcellularLocation>
        <location evidence="1">Cell inner membrane</location>
        <topology evidence="1">Peripheral membrane protein</topology>
    </subcellularLocation>
</comment>
<comment type="similarity">
    <text evidence="1">Belongs to the ABC transporter superfamily. Spermidine/putrescine importer (TC 3.A.1.11.1) family.</text>
</comment>
<name>POTA_SHIFL</name>
<proteinExistence type="inferred from homology"/>
<dbReference type="EC" id="7.6.2.11" evidence="1"/>
<dbReference type="EMBL" id="AE005674">
    <property type="protein sequence ID" value="AAN42746.1"/>
    <property type="molecule type" value="Genomic_DNA"/>
</dbReference>
<dbReference type="EMBL" id="AE014073">
    <property type="protein sequence ID" value="AAP16635.1"/>
    <property type="molecule type" value="Genomic_DNA"/>
</dbReference>
<dbReference type="RefSeq" id="NP_707039.1">
    <property type="nucleotide sequence ID" value="NC_004337.2"/>
</dbReference>
<dbReference type="RefSeq" id="WP_000531594.1">
    <property type="nucleotide sequence ID" value="NZ_WPGW01000001.1"/>
</dbReference>
<dbReference type="SMR" id="P69877"/>
<dbReference type="STRING" id="198214.SF1128"/>
<dbReference type="PaxDb" id="198214-SF1128"/>
<dbReference type="GeneID" id="1024051"/>
<dbReference type="GeneID" id="75203712"/>
<dbReference type="KEGG" id="sfl:SF1128"/>
<dbReference type="KEGG" id="sfx:S1208"/>
<dbReference type="PATRIC" id="fig|198214.7.peg.1319"/>
<dbReference type="HOGENOM" id="CLU_000604_1_1_6"/>
<dbReference type="Proteomes" id="UP000001006">
    <property type="component" value="Chromosome"/>
</dbReference>
<dbReference type="Proteomes" id="UP000002673">
    <property type="component" value="Chromosome"/>
</dbReference>
<dbReference type="GO" id="GO:0043190">
    <property type="term" value="C:ATP-binding cassette (ABC) transporter complex"/>
    <property type="evidence" value="ECO:0007669"/>
    <property type="project" value="InterPro"/>
</dbReference>
<dbReference type="GO" id="GO:0015594">
    <property type="term" value="F:ABC-type putrescine transporter activity"/>
    <property type="evidence" value="ECO:0007669"/>
    <property type="project" value="InterPro"/>
</dbReference>
<dbReference type="GO" id="GO:0005524">
    <property type="term" value="F:ATP binding"/>
    <property type="evidence" value="ECO:0007669"/>
    <property type="project" value="UniProtKB-KW"/>
</dbReference>
<dbReference type="GO" id="GO:0016887">
    <property type="term" value="F:ATP hydrolysis activity"/>
    <property type="evidence" value="ECO:0007669"/>
    <property type="project" value="InterPro"/>
</dbReference>
<dbReference type="CDD" id="cd03300">
    <property type="entry name" value="ABC_PotA_N"/>
    <property type="match status" value="1"/>
</dbReference>
<dbReference type="FunFam" id="2.40.50.100:FF:000017">
    <property type="entry name" value="Spermidine/putrescine import ATP-binding protein PotA"/>
    <property type="match status" value="1"/>
</dbReference>
<dbReference type="FunFam" id="3.40.50.300:FF:000133">
    <property type="entry name" value="Spermidine/putrescine import ATP-binding protein PotA"/>
    <property type="match status" value="1"/>
</dbReference>
<dbReference type="Gene3D" id="2.40.50.100">
    <property type="match status" value="1"/>
</dbReference>
<dbReference type="Gene3D" id="3.40.50.300">
    <property type="entry name" value="P-loop containing nucleotide triphosphate hydrolases"/>
    <property type="match status" value="1"/>
</dbReference>
<dbReference type="InterPro" id="IPR003593">
    <property type="entry name" value="AAA+_ATPase"/>
</dbReference>
<dbReference type="InterPro" id="IPR050093">
    <property type="entry name" value="ABC_SmlMolc_Importer"/>
</dbReference>
<dbReference type="InterPro" id="IPR003439">
    <property type="entry name" value="ABC_transporter-like_ATP-bd"/>
</dbReference>
<dbReference type="InterPro" id="IPR017871">
    <property type="entry name" value="ABC_transporter-like_CS"/>
</dbReference>
<dbReference type="InterPro" id="IPR008995">
    <property type="entry name" value="Mo/tungstate-bd_C_term_dom"/>
</dbReference>
<dbReference type="InterPro" id="IPR027417">
    <property type="entry name" value="P-loop_NTPase"/>
</dbReference>
<dbReference type="InterPro" id="IPR005893">
    <property type="entry name" value="PotA-like"/>
</dbReference>
<dbReference type="InterPro" id="IPR017879">
    <property type="entry name" value="PotA_ATP-bd"/>
</dbReference>
<dbReference type="InterPro" id="IPR013611">
    <property type="entry name" value="Transp-assoc_OB_typ2"/>
</dbReference>
<dbReference type="NCBIfam" id="TIGR01187">
    <property type="entry name" value="potA"/>
    <property type="match status" value="1"/>
</dbReference>
<dbReference type="NCBIfam" id="NF006987">
    <property type="entry name" value="PRK09452.1"/>
    <property type="match status" value="1"/>
</dbReference>
<dbReference type="PANTHER" id="PTHR42781">
    <property type="entry name" value="SPERMIDINE/PUTRESCINE IMPORT ATP-BINDING PROTEIN POTA"/>
    <property type="match status" value="1"/>
</dbReference>
<dbReference type="PANTHER" id="PTHR42781:SF4">
    <property type="entry name" value="SPERMIDINE_PUTRESCINE IMPORT ATP-BINDING PROTEIN POTA"/>
    <property type="match status" value="1"/>
</dbReference>
<dbReference type="Pfam" id="PF00005">
    <property type="entry name" value="ABC_tran"/>
    <property type="match status" value="1"/>
</dbReference>
<dbReference type="Pfam" id="PF08402">
    <property type="entry name" value="TOBE_2"/>
    <property type="match status" value="1"/>
</dbReference>
<dbReference type="SMART" id="SM00382">
    <property type="entry name" value="AAA"/>
    <property type="match status" value="1"/>
</dbReference>
<dbReference type="SUPFAM" id="SSF50331">
    <property type="entry name" value="MOP-like"/>
    <property type="match status" value="1"/>
</dbReference>
<dbReference type="SUPFAM" id="SSF52540">
    <property type="entry name" value="P-loop containing nucleoside triphosphate hydrolases"/>
    <property type="match status" value="1"/>
</dbReference>
<dbReference type="PROSITE" id="PS00211">
    <property type="entry name" value="ABC_TRANSPORTER_1"/>
    <property type="match status" value="1"/>
</dbReference>
<dbReference type="PROSITE" id="PS50893">
    <property type="entry name" value="ABC_TRANSPORTER_2"/>
    <property type="match status" value="1"/>
</dbReference>
<dbReference type="PROSITE" id="PS51305">
    <property type="entry name" value="POTA"/>
    <property type="match status" value="1"/>
</dbReference>
<protein>
    <recommendedName>
        <fullName evidence="1">Spermidine/putrescine import ATP-binding protein PotA</fullName>
        <ecNumber evidence="1">7.6.2.11</ecNumber>
    </recommendedName>
</protein>